<gene>
    <name evidence="1" type="primary">kduI</name>
    <name type="ordered locus">SNSL254_A3249</name>
</gene>
<comment type="function">
    <text evidence="1">Catalyzes the isomerization of 5-dehydro-4-deoxy-D-glucuronate to 3-deoxy-D-glycero-2,5-hexodiulosonate.</text>
</comment>
<comment type="catalytic activity">
    <reaction evidence="1">
        <text>5-dehydro-4-deoxy-D-glucuronate = 3-deoxy-D-glycero-2,5-hexodiulosonate</text>
        <dbReference type="Rhea" id="RHEA:23896"/>
        <dbReference type="ChEBI" id="CHEBI:17117"/>
        <dbReference type="ChEBI" id="CHEBI:29071"/>
        <dbReference type="EC" id="5.3.1.17"/>
    </reaction>
</comment>
<comment type="cofactor">
    <cofactor evidence="1">
        <name>Zn(2+)</name>
        <dbReference type="ChEBI" id="CHEBI:29105"/>
    </cofactor>
    <text evidence="1">Binds 1 zinc ion per subunit.</text>
</comment>
<comment type="pathway">
    <text evidence="1">Glycan metabolism; pectin degradation; 2-dehydro-3-deoxy-D-gluconate from pectin: step 4/5.</text>
</comment>
<comment type="similarity">
    <text evidence="1">Belongs to the KduI family.</text>
</comment>
<accession>B4T512</accession>
<feature type="chain" id="PRO_1000131893" description="4-deoxy-L-threo-5-hexosulose-uronate ketol-isomerase">
    <location>
        <begin position="1"/>
        <end position="278"/>
    </location>
</feature>
<feature type="binding site" evidence="1">
    <location>
        <position position="196"/>
    </location>
    <ligand>
        <name>Zn(2+)</name>
        <dbReference type="ChEBI" id="CHEBI:29105"/>
    </ligand>
</feature>
<feature type="binding site" evidence="1">
    <location>
        <position position="198"/>
    </location>
    <ligand>
        <name>Zn(2+)</name>
        <dbReference type="ChEBI" id="CHEBI:29105"/>
    </ligand>
</feature>
<feature type="binding site" evidence="1">
    <location>
        <position position="203"/>
    </location>
    <ligand>
        <name>Zn(2+)</name>
        <dbReference type="ChEBI" id="CHEBI:29105"/>
    </ligand>
</feature>
<feature type="binding site" evidence="1">
    <location>
        <position position="245"/>
    </location>
    <ligand>
        <name>Zn(2+)</name>
        <dbReference type="ChEBI" id="CHEBI:29105"/>
    </ligand>
</feature>
<proteinExistence type="inferred from homology"/>
<dbReference type="EC" id="5.3.1.17" evidence="1"/>
<dbReference type="EMBL" id="CP001113">
    <property type="protein sequence ID" value="ACF65437.1"/>
    <property type="molecule type" value="Genomic_DNA"/>
</dbReference>
<dbReference type="RefSeq" id="WP_000383274.1">
    <property type="nucleotide sequence ID" value="NZ_CCMR01000001.1"/>
</dbReference>
<dbReference type="SMR" id="B4T512"/>
<dbReference type="KEGG" id="see:SNSL254_A3249"/>
<dbReference type="HOGENOM" id="CLU_062609_0_0_6"/>
<dbReference type="UniPathway" id="UPA00545">
    <property type="reaction ID" value="UER00826"/>
</dbReference>
<dbReference type="Proteomes" id="UP000008824">
    <property type="component" value="Chromosome"/>
</dbReference>
<dbReference type="GO" id="GO:0008697">
    <property type="term" value="F:4-deoxy-L-threo-5-hexosulose-uronate ketol-isomerase activity"/>
    <property type="evidence" value="ECO:0007669"/>
    <property type="project" value="UniProtKB-UniRule"/>
</dbReference>
<dbReference type="GO" id="GO:0008270">
    <property type="term" value="F:zinc ion binding"/>
    <property type="evidence" value="ECO:0007669"/>
    <property type="project" value="UniProtKB-UniRule"/>
</dbReference>
<dbReference type="GO" id="GO:0019698">
    <property type="term" value="P:D-galacturonate catabolic process"/>
    <property type="evidence" value="ECO:0007669"/>
    <property type="project" value="TreeGrafter"/>
</dbReference>
<dbReference type="GO" id="GO:0042840">
    <property type="term" value="P:D-glucuronate catabolic process"/>
    <property type="evidence" value="ECO:0007669"/>
    <property type="project" value="TreeGrafter"/>
</dbReference>
<dbReference type="GO" id="GO:0045490">
    <property type="term" value="P:pectin catabolic process"/>
    <property type="evidence" value="ECO:0007669"/>
    <property type="project" value="UniProtKB-UniRule"/>
</dbReference>
<dbReference type="CDD" id="cd20491">
    <property type="entry name" value="cupin_KduI_C"/>
    <property type="match status" value="1"/>
</dbReference>
<dbReference type="CDD" id="cd20294">
    <property type="entry name" value="cupin_KduI_N"/>
    <property type="match status" value="1"/>
</dbReference>
<dbReference type="FunFam" id="2.60.120.10:FF:000018">
    <property type="entry name" value="4-deoxy-L-threo-5-hexosulose-uronate ketol-isomerase"/>
    <property type="match status" value="1"/>
</dbReference>
<dbReference type="FunFam" id="2.60.120.520:FF:000001">
    <property type="entry name" value="4-deoxy-L-threo-5-hexosulose-uronate ketol-isomerase"/>
    <property type="match status" value="1"/>
</dbReference>
<dbReference type="Gene3D" id="2.60.120.10">
    <property type="entry name" value="Jelly Rolls"/>
    <property type="match status" value="1"/>
</dbReference>
<dbReference type="Gene3D" id="2.60.120.520">
    <property type="entry name" value="pectin degrading enzyme 5-keto 4- deoxyuronate isomerase, domain 1"/>
    <property type="match status" value="1"/>
</dbReference>
<dbReference type="HAMAP" id="MF_00687">
    <property type="entry name" value="KduI"/>
    <property type="match status" value="1"/>
</dbReference>
<dbReference type="InterPro" id="IPR007045">
    <property type="entry name" value="KduI"/>
</dbReference>
<dbReference type="InterPro" id="IPR021120">
    <property type="entry name" value="KduI/IolB_isomerase"/>
</dbReference>
<dbReference type="InterPro" id="IPR027449">
    <property type="entry name" value="KduI_N"/>
</dbReference>
<dbReference type="InterPro" id="IPR014710">
    <property type="entry name" value="RmlC-like_jellyroll"/>
</dbReference>
<dbReference type="InterPro" id="IPR011051">
    <property type="entry name" value="RmlC_Cupin_sf"/>
</dbReference>
<dbReference type="NCBIfam" id="NF002091">
    <property type="entry name" value="PRK00924.1"/>
    <property type="match status" value="1"/>
</dbReference>
<dbReference type="PANTHER" id="PTHR38461">
    <property type="entry name" value="4-DEOXY-L-THREO-5-HEXOSULOSE-URONATE KETOL-ISOMERASE"/>
    <property type="match status" value="1"/>
</dbReference>
<dbReference type="PANTHER" id="PTHR38461:SF1">
    <property type="entry name" value="4-DEOXY-L-THREO-5-HEXOSULOSE-URONATE KETOL-ISOMERASE"/>
    <property type="match status" value="1"/>
</dbReference>
<dbReference type="Pfam" id="PF04962">
    <property type="entry name" value="KduI"/>
    <property type="match status" value="1"/>
</dbReference>
<dbReference type="PIRSF" id="PIRSF006625">
    <property type="entry name" value="KduI"/>
    <property type="match status" value="1"/>
</dbReference>
<dbReference type="SUPFAM" id="SSF51182">
    <property type="entry name" value="RmlC-like cupins"/>
    <property type="match status" value="1"/>
</dbReference>
<keyword id="KW-0413">Isomerase</keyword>
<keyword id="KW-0479">Metal-binding</keyword>
<keyword id="KW-0862">Zinc</keyword>
<protein>
    <recommendedName>
        <fullName evidence="1">4-deoxy-L-threo-5-hexosulose-uronate ketol-isomerase</fullName>
        <ecNumber evidence="1">5.3.1.17</ecNumber>
    </recommendedName>
    <alternativeName>
        <fullName evidence="1">5-keto-4-deoxyuronate isomerase</fullName>
    </alternativeName>
    <alternativeName>
        <fullName evidence="1">DKI isomerase</fullName>
    </alternativeName>
</protein>
<name>KDUI_SALNS</name>
<organism>
    <name type="scientific">Salmonella newport (strain SL254)</name>
    <dbReference type="NCBI Taxonomy" id="423368"/>
    <lineage>
        <taxon>Bacteria</taxon>
        <taxon>Pseudomonadati</taxon>
        <taxon>Pseudomonadota</taxon>
        <taxon>Gammaproteobacteria</taxon>
        <taxon>Enterobacterales</taxon>
        <taxon>Enterobacteriaceae</taxon>
        <taxon>Salmonella</taxon>
    </lineage>
</organism>
<evidence type="ECO:0000255" key="1">
    <source>
        <dbReference type="HAMAP-Rule" id="MF_00687"/>
    </source>
</evidence>
<sequence length="278" mass="31205">MDVRQSIHSEHAKTLDTQALRREFLIENIFVADEYTMVYSHIDRIIVGGIMPVSHSVEIGGEVGKQLGVSRLLDRRELGVINIGGAGAIIVDGQRHDIGHRDALYIGKGAKELVFVSNEASRPAKFYYNCAPAHTAYPTKKVSPADVAPVTLGDNLTSNRRTINKYFVPDVLETCQLSMGLTELAPGNLWNTMPCHTHERRMEVYLYFNMEEDSCVFHMMGQPQETRHIVMRNEQAVISPSWSIHSGVGTKAYTFIWGMVGENQVFDDMDHVAVQDLR</sequence>
<reference key="1">
    <citation type="journal article" date="2011" name="J. Bacteriol.">
        <title>Comparative genomics of 28 Salmonella enterica isolates: evidence for CRISPR-mediated adaptive sublineage evolution.</title>
        <authorList>
            <person name="Fricke W.F."/>
            <person name="Mammel M.K."/>
            <person name="McDermott P.F."/>
            <person name="Tartera C."/>
            <person name="White D.G."/>
            <person name="Leclerc J.E."/>
            <person name="Ravel J."/>
            <person name="Cebula T.A."/>
        </authorList>
    </citation>
    <scope>NUCLEOTIDE SEQUENCE [LARGE SCALE GENOMIC DNA]</scope>
    <source>
        <strain>SL254</strain>
    </source>
</reference>